<dbReference type="EMBL" id="AY653733">
    <property type="protein sequence ID" value="AAV51000.1"/>
    <property type="molecule type" value="Genomic_DNA"/>
</dbReference>
<dbReference type="KEGG" id="vg:9925396"/>
<dbReference type="OrthoDB" id="16754at10239"/>
<dbReference type="Proteomes" id="UP000001134">
    <property type="component" value="Genome"/>
</dbReference>
<dbReference type="GO" id="GO:0000266">
    <property type="term" value="P:mitochondrial fission"/>
    <property type="evidence" value="ECO:0007669"/>
    <property type="project" value="TreeGrafter"/>
</dbReference>
<dbReference type="InterPro" id="IPR019560">
    <property type="entry name" value="Mitochondrial_18_kDa_protein"/>
</dbReference>
<dbReference type="PANTHER" id="PTHR11001">
    <property type="entry name" value="MITOCHONDRIAL FISSION PROCESS PROTEIN 1"/>
    <property type="match status" value="1"/>
</dbReference>
<dbReference type="PANTHER" id="PTHR11001:SF2">
    <property type="entry name" value="MITOCHONDRIAL FISSION PROCESS PROTEIN 1"/>
    <property type="match status" value="1"/>
</dbReference>
<dbReference type="Pfam" id="PF10558">
    <property type="entry name" value="MTP18"/>
    <property type="match status" value="1"/>
</dbReference>
<reference key="1">
    <citation type="journal article" date="2004" name="Science">
        <title>The 1.2-megabase genome sequence of Mimivirus.</title>
        <authorList>
            <person name="Raoult D."/>
            <person name="Audic S."/>
            <person name="Robert C."/>
            <person name="Abergel C."/>
            <person name="Renesto P."/>
            <person name="Ogata H."/>
            <person name="La Scola B."/>
            <person name="Susan M."/>
            <person name="Claverie J.-M."/>
        </authorList>
    </citation>
    <scope>NUCLEOTIDE SEQUENCE [LARGE SCALE GENOMIC DNA]</scope>
    <source>
        <strain>Rowbotham-Bradford</strain>
    </source>
</reference>
<feature type="chain" id="PRO_0000071340" description="Uncharacterized protein R740">
    <location>
        <begin position="1"/>
        <end position="187"/>
    </location>
</feature>
<organism>
    <name type="scientific">Acanthamoeba polyphaga mimivirus</name>
    <name type="common">APMV</name>
    <dbReference type="NCBI Taxonomy" id="212035"/>
    <lineage>
        <taxon>Viruses</taxon>
        <taxon>Varidnaviria</taxon>
        <taxon>Bamfordvirae</taxon>
        <taxon>Nucleocytoviricota</taxon>
        <taxon>Megaviricetes</taxon>
        <taxon>Imitervirales</taxon>
        <taxon>Mimiviridae</taxon>
        <taxon>Megamimivirinae</taxon>
        <taxon>Mimivirus</taxon>
        <taxon>Mimivirus bradfordmassiliense</taxon>
    </lineage>
</organism>
<organismHost>
    <name type="scientific">Acanthamoeba polyphaga</name>
    <name type="common">Amoeba</name>
    <dbReference type="NCBI Taxonomy" id="5757"/>
</organismHost>
<sequence length="187" mass="21524">MDKRPEETSVIPESLKYAGPMSRLARAFSGFRMASYASDVGEATRGTFPNQFVHSMYAVTISYIFVDLYFRYKDNKHLSNNKQCDSKMTEFQKYMGYHTLWHAQASLFFPTITIHSIVSSTKEFTANINWLNPKVKKFAPVCLSLALIPCLIKPIDDLADKIMDYSYCKLTCYQPHDKHHTESAHEN</sequence>
<proteinExistence type="predicted"/>
<gene>
    <name type="ordered locus">MIMI_R740</name>
</gene>
<protein>
    <recommendedName>
        <fullName>Uncharacterized protein R740</fullName>
    </recommendedName>
</protein>
<accession>Q5UNZ8</accession>
<keyword id="KW-1185">Reference proteome</keyword>
<name>YR740_MIMIV</name>